<organism>
    <name type="scientific">Clostridium kluyveri (strain NBRC 12016)</name>
    <dbReference type="NCBI Taxonomy" id="583346"/>
    <lineage>
        <taxon>Bacteria</taxon>
        <taxon>Bacillati</taxon>
        <taxon>Bacillota</taxon>
        <taxon>Clostridia</taxon>
        <taxon>Eubacteriales</taxon>
        <taxon>Clostridiaceae</taxon>
        <taxon>Clostridium</taxon>
    </lineage>
</organism>
<keyword id="KW-0963">Cytoplasm</keyword>
<keyword id="KW-0648">Protein biosynthesis</keyword>
<feature type="chain" id="PRO_1000194914" description="Ribosome-recycling factor">
    <location>
        <begin position="1"/>
        <end position="185"/>
    </location>
</feature>
<dbReference type="EMBL" id="AP009049">
    <property type="protein sequence ID" value="BAH06366.1"/>
    <property type="molecule type" value="Genomic_DNA"/>
</dbReference>
<dbReference type="RefSeq" id="WP_012101809.1">
    <property type="nucleotide sequence ID" value="NC_011837.1"/>
</dbReference>
<dbReference type="SMR" id="B9E1J1"/>
<dbReference type="KEGG" id="ckr:CKR_1315"/>
<dbReference type="HOGENOM" id="CLU_073981_2_0_9"/>
<dbReference type="Proteomes" id="UP000007969">
    <property type="component" value="Chromosome"/>
</dbReference>
<dbReference type="GO" id="GO:0005737">
    <property type="term" value="C:cytoplasm"/>
    <property type="evidence" value="ECO:0007669"/>
    <property type="project" value="UniProtKB-SubCell"/>
</dbReference>
<dbReference type="GO" id="GO:0043023">
    <property type="term" value="F:ribosomal large subunit binding"/>
    <property type="evidence" value="ECO:0007669"/>
    <property type="project" value="TreeGrafter"/>
</dbReference>
<dbReference type="GO" id="GO:0006415">
    <property type="term" value="P:translational termination"/>
    <property type="evidence" value="ECO:0007669"/>
    <property type="project" value="UniProtKB-UniRule"/>
</dbReference>
<dbReference type="CDD" id="cd00520">
    <property type="entry name" value="RRF"/>
    <property type="match status" value="1"/>
</dbReference>
<dbReference type="FunFam" id="1.10.132.20:FF:000001">
    <property type="entry name" value="Ribosome-recycling factor"/>
    <property type="match status" value="1"/>
</dbReference>
<dbReference type="FunFam" id="3.30.1360.40:FF:000001">
    <property type="entry name" value="Ribosome-recycling factor"/>
    <property type="match status" value="1"/>
</dbReference>
<dbReference type="Gene3D" id="3.30.1360.40">
    <property type="match status" value="1"/>
</dbReference>
<dbReference type="Gene3D" id="1.10.132.20">
    <property type="entry name" value="Ribosome-recycling factor"/>
    <property type="match status" value="1"/>
</dbReference>
<dbReference type="HAMAP" id="MF_00040">
    <property type="entry name" value="RRF"/>
    <property type="match status" value="1"/>
</dbReference>
<dbReference type="InterPro" id="IPR002661">
    <property type="entry name" value="Ribosome_recyc_fac"/>
</dbReference>
<dbReference type="InterPro" id="IPR023584">
    <property type="entry name" value="Ribosome_recyc_fac_dom"/>
</dbReference>
<dbReference type="InterPro" id="IPR036191">
    <property type="entry name" value="RRF_sf"/>
</dbReference>
<dbReference type="NCBIfam" id="TIGR00496">
    <property type="entry name" value="frr"/>
    <property type="match status" value="1"/>
</dbReference>
<dbReference type="PANTHER" id="PTHR20982:SF3">
    <property type="entry name" value="MITOCHONDRIAL RIBOSOME RECYCLING FACTOR PSEUDO 1"/>
    <property type="match status" value="1"/>
</dbReference>
<dbReference type="PANTHER" id="PTHR20982">
    <property type="entry name" value="RIBOSOME RECYCLING FACTOR"/>
    <property type="match status" value="1"/>
</dbReference>
<dbReference type="Pfam" id="PF01765">
    <property type="entry name" value="RRF"/>
    <property type="match status" value="1"/>
</dbReference>
<dbReference type="SUPFAM" id="SSF55194">
    <property type="entry name" value="Ribosome recycling factor, RRF"/>
    <property type="match status" value="1"/>
</dbReference>
<protein>
    <recommendedName>
        <fullName evidence="1">Ribosome-recycling factor</fullName>
        <shortName evidence="1">RRF</shortName>
    </recommendedName>
    <alternativeName>
        <fullName evidence="1">Ribosome-releasing factor</fullName>
    </alternativeName>
</protein>
<sequence length="185" mass="20856">MIKDILNKADEKMNKTVDVLVKELASMKAGRANPAILDKIEVEYYGAMTPISQLAGISIPEARILAIQPWDKSALKSIEKAILKSDLGINPSNDGEIIRLIIPELTEETRKNIVKNIKKTGEDSKVAIRGIRRECNDKFKALKKKNDISEDEIKKGEEQIQKKTDIFIKNIDAILEKKEKEIMSL</sequence>
<gene>
    <name evidence="1" type="primary">frr</name>
    <name type="ordered locus">CKR_1315</name>
</gene>
<reference key="1">
    <citation type="submission" date="2005-09" db="EMBL/GenBank/DDBJ databases">
        <title>Complete genome sequence of Clostridium kluyveri and comparative genomics of Clostridia species.</title>
        <authorList>
            <person name="Inui M."/>
            <person name="Nonaka H."/>
            <person name="Shinoda Y."/>
            <person name="Ikenaga Y."/>
            <person name="Abe M."/>
            <person name="Naito K."/>
            <person name="Vertes A.A."/>
            <person name="Yukawa H."/>
        </authorList>
    </citation>
    <scope>NUCLEOTIDE SEQUENCE [LARGE SCALE GENOMIC DNA]</scope>
    <source>
        <strain>NBRC 12016</strain>
    </source>
</reference>
<evidence type="ECO:0000255" key="1">
    <source>
        <dbReference type="HAMAP-Rule" id="MF_00040"/>
    </source>
</evidence>
<accession>B9E1J1</accession>
<proteinExistence type="inferred from homology"/>
<name>RRF_CLOK1</name>
<comment type="function">
    <text evidence="1">Responsible for the release of ribosomes from messenger RNA at the termination of protein biosynthesis. May increase the efficiency of translation by recycling ribosomes from one round of translation to another.</text>
</comment>
<comment type="subcellular location">
    <subcellularLocation>
        <location evidence="1">Cytoplasm</location>
    </subcellularLocation>
</comment>
<comment type="similarity">
    <text evidence="1">Belongs to the RRF family.</text>
</comment>